<name>65KD_ZYMMA</name>
<evidence type="ECO:0000255" key="1">
    <source>
        <dbReference type="PROSITE-ProRule" id="PRU00995"/>
    </source>
</evidence>
<evidence type="ECO:0000305" key="2"/>
<accession>P15255</accession>
<accession>F8DXD6</accession>
<feature type="chain" id="PRO_0000064391" description="65 kDa protein">
    <location>
        <begin position="1"/>
        <end position="584"/>
    </location>
</feature>
<feature type="domain" description="Toprim" evidence="1">
    <location>
        <begin position="459"/>
        <end position="548"/>
    </location>
</feature>
<feature type="sequence conflict" description="In Ref. 1; CAA32611." evidence="2" ref="1">
    <original>G</original>
    <variation>D</variation>
    <location>
        <position position="163"/>
    </location>
</feature>
<keyword id="KW-0614">Plasmid</keyword>
<organism>
    <name type="scientific">Zymomonas mobilis subsp. mobilis (strain ATCC 10988 / DSM 424 / LMG 404 / NCIMB 8938 / NRRL B-806 / ZM1)</name>
    <dbReference type="NCBI Taxonomy" id="555217"/>
    <lineage>
        <taxon>Bacteria</taxon>
        <taxon>Pseudomonadati</taxon>
        <taxon>Pseudomonadota</taxon>
        <taxon>Alphaproteobacteria</taxon>
        <taxon>Sphingomonadales</taxon>
        <taxon>Zymomonadaceae</taxon>
        <taxon>Zymomonas</taxon>
    </lineage>
</organism>
<dbReference type="EMBL" id="X14438">
    <property type="protein sequence ID" value="CAA32611.1"/>
    <property type="molecule type" value="Genomic_DNA"/>
</dbReference>
<dbReference type="EMBL" id="CP002856">
    <property type="protein sequence ID" value="AEH63659.1"/>
    <property type="molecule type" value="Genomic_DNA"/>
</dbReference>
<dbReference type="PIR" id="S06696">
    <property type="entry name" value="S06696"/>
</dbReference>
<dbReference type="RefSeq" id="WP_014466486.1">
    <property type="nucleotide sequence ID" value="NC_017185.1"/>
</dbReference>
<dbReference type="RefSeq" id="YP_001569033.1">
    <property type="nucleotide sequence ID" value="NC_010021.1"/>
</dbReference>
<dbReference type="SMR" id="P15255"/>
<dbReference type="KEGG" id="zmm:Zmob_1874"/>
<dbReference type="PATRIC" id="fig|555217.8.peg.2"/>
<dbReference type="HOGENOM" id="CLU_029018_0_0_5"/>
<dbReference type="OrthoDB" id="6655189at2"/>
<dbReference type="Proteomes" id="UP000001494">
    <property type="component" value="Plasmid pZMOBP6"/>
</dbReference>
<dbReference type="GO" id="GO:0003677">
    <property type="term" value="F:DNA binding"/>
    <property type="evidence" value="ECO:0007669"/>
    <property type="project" value="InterPro"/>
</dbReference>
<dbReference type="GO" id="GO:0006310">
    <property type="term" value="P:DNA recombination"/>
    <property type="evidence" value="ECO:0007669"/>
    <property type="project" value="InterPro"/>
</dbReference>
<dbReference type="CDD" id="cd17242">
    <property type="entry name" value="MobM_relaxase"/>
    <property type="match status" value="1"/>
</dbReference>
<dbReference type="CDD" id="cd00188">
    <property type="entry name" value="TOPRIM"/>
    <property type="match status" value="1"/>
</dbReference>
<dbReference type="Gene3D" id="3.30.930.30">
    <property type="match status" value="1"/>
</dbReference>
<dbReference type="Gene3D" id="3.40.1360.10">
    <property type="match status" value="1"/>
</dbReference>
<dbReference type="InterPro" id="IPR025054">
    <property type="entry name" value="DUF3991"/>
</dbReference>
<dbReference type="InterPro" id="IPR001668">
    <property type="entry name" value="Mob_Pre"/>
</dbReference>
<dbReference type="InterPro" id="IPR006171">
    <property type="entry name" value="TOPRIM_dom"/>
</dbReference>
<dbReference type="NCBIfam" id="NF041497">
    <property type="entry name" value="MobV"/>
    <property type="match status" value="1"/>
</dbReference>
<dbReference type="Pfam" id="PF13154">
    <property type="entry name" value="DUF3991"/>
    <property type="match status" value="1"/>
</dbReference>
<dbReference type="Pfam" id="PF01076">
    <property type="entry name" value="Mob_Pre"/>
    <property type="match status" value="1"/>
</dbReference>
<dbReference type="Pfam" id="PF13155">
    <property type="entry name" value="Toprim_2"/>
    <property type="match status" value="1"/>
</dbReference>
<dbReference type="SMART" id="SM00493">
    <property type="entry name" value="TOPRIM"/>
    <property type="match status" value="1"/>
</dbReference>
<dbReference type="SUPFAM" id="SSF57783">
    <property type="entry name" value="Zinc beta-ribbon"/>
    <property type="match status" value="1"/>
</dbReference>
<dbReference type="PROSITE" id="PS50880">
    <property type="entry name" value="TOPRIM"/>
    <property type="match status" value="1"/>
</dbReference>
<proteinExistence type="predicted"/>
<protein>
    <recommendedName>
        <fullName>65 kDa protein</fullName>
    </recommendedName>
    <alternativeName>
        <fullName>ORF 1</fullName>
    </alternativeName>
</protein>
<geneLocation type="plasmid">
    <name>pZM2</name>
</geneLocation>
<geneLocation type="plasmid">
    <name>pZMOBP6</name>
</geneLocation>
<sequence length="584" mass="65735">MPNYAIFRFEKHKTVGTIKAASLHMTRGRETQNADPDRKELNEILKGSTDPSADVKSMLNKIQKETGKPLRKNGVQAIELFFGMSPEWSKQATPEKLEHWKTITQQWAEQTFGENNLVSLQLHADETTPHLTGFMVPRDPDTGRLNASRWFDGRKALSALQTGYAASMEPLGLARGVKGSKATHQRVQRHYGNINKTLQLDPKIQAPIPPSIFTNKEEWAEKERLKAQKSALSVIQPLADKAARYVEEKKRADRAEEALSLARRKADSMRAIPLSDVLKTLGMELDPADKKQWRDPEHRFRITIDNYKFYDHSAQKGGGGAIDLLMHTTGQDYKGALSWLADRFGDETARHDMLLNDLYRSKIRINEAKQRPAFKQPEHKNEPKIREFLNSRGISFNNIPDSIRTDDRGNVAFLMYDDKDTLQGAELRGTSSGFKGLALGSSREAHFTGSINVKNDEKYDLYIAESAIDAISVVGFLSPEKIKAGVKLLSTSGVRTSLTKTLRKIVEKASSVHIAYDWDAVGQRAASLLVGAIKAAFPTKKVENWLPPKEQMIHGKDWNDLLMVKRGLKKTVAPKQTVKRKIRF</sequence>
<reference key="1">
    <citation type="journal article" date="1989" name="J. Biotechnol.">
        <title>The nucleotide sequence of the 2.7 kilobase pair plasmid of Zymomonas mobilis ATCC 10988.</title>
        <authorList>
            <person name="Misawa N."/>
            <person name="Nakamura K."/>
        </authorList>
    </citation>
    <scope>NUCLEOTIDE SEQUENCE [GENOMIC DNA]</scope>
    <source>
        <strain>ATCC 10988 / DSM 424 / CCUG 17860 / LMG 404 / NCIMB 8938 / NRRL B-806 / ZM1</strain>
        <plasmid>pZM2</plasmid>
    </source>
</reference>
<reference key="2">
    <citation type="journal article" date="2011" name="J. Bacteriol.">
        <title>Genome sequence of the ethanol-producing Zymomonas mobilis subsp. mobilis lectotype strain ATCC 10988.</title>
        <authorList>
            <person name="Pappas K.M."/>
            <person name="Kouvelis V.N."/>
            <person name="Saunders E."/>
            <person name="Brettin T.S."/>
            <person name="Bruce D."/>
            <person name="Detter C."/>
            <person name="Balakireva M."/>
            <person name="Han C.S."/>
            <person name="Savvakis G."/>
            <person name="Kyrpides N.C."/>
            <person name="Typas M.A."/>
        </authorList>
    </citation>
    <scope>NUCLEOTIDE SEQUENCE [LARGE SCALE GENOMIC DNA]</scope>
    <source>
        <strain>ATCC 10988 / DSM 424 / CCUG 17860 / LMG 404 / NCIMB 8938 / NRRL B-806 / ZM1</strain>
        <plasmid>pZMOBP6</plasmid>
    </source>
</reference>
<gene>
    <name type="ordered locus">Zmob_1874</name>
</gene>